<reference key="1">
    <citation type="journal article" date="2005" name="J. Gen. Virol.">
        <title>A novel class of herpesvirus with bivalve hosts.</title>
        <authorList>
            <person name="Davison A.J."/>
            <person name="Trus B.L."/>
            <person name="Cheng N."/>
            <person name="Steven A.C."/>
            <person name="Watson M.S."/>
            <person name="Cunningham C."/>
            <person name="Le Deuff R.M."/>
            <person name="Renault T."/>
        </authorList>
    </citation>
    <scope>NUCLEOTIDE SEQUENCE [LARGE SCALE GENOMIC DNA]</scope>
</reference>
<organismHost>
    <name type="scientific">Magallana gigas</name>
    <name type="common">Pacific oyster</name>
    <name type="synonym">Crassostrea gigas</name>
    <dbReference type="NCBI Taxonomy" id="29159"/>
</organismHost>
<organismHost>
    <name type="scientific">Pecten maximus</name>
    <name type="common">King scallop</name>
    <name type="synonym">Pilgrim's clam</name>
    <dbReference type="NCBI Taxonomy" id="6579"/>
</organismHost>
<proteinExistence type="inferred from homology"/>
<keyword id="KW-0325">Glycoprotein</keyword>
<keyword id="KW-1043">Host membrane</keyword>
<keyword id="KW-0472">Membrane</keyword>
<keyword id="KW-1185">Reference proteome</keyword>
<keyword id="KW-0732">Signal</keyword>
<keyword id="KW-0812">Transmembrane</keyword>
<keyword id="KW-1133">Transmembrane helix</keyword>
<name>Y054_OSHVF</name>
<dbReference type="EMBL" id="AY509253">
    <property type="protein sequence ID" value="AAS00944.1"/>
    <property type="molecule type" value="Genomic_DNA"/>
</dbReference>
<dbReference type="RefSeq" id="YP_024597.1">
    <property type="nucleotide sequence ID" value="NC_005881.2"/>
</dbReference>
<dbReference type="KEGG" id="vg:2948152"/>
<dbReference type="Proteomes" id="UP000007021">
    <property type="component" value="Segment"/>
</dbReference>
<dbReference type="GO" id="GO:0033644">
    <property type="term" value="C:host cell membrane"/>
    <property type="evidence" value="ECO:0007669"/>
    <property type="project" value="UniProtKB-SubCell"/>
</dbReference>
<dbReference type="GO" id="GO:0016020">
    <property type="term" value="C:membrane"/>
    <property type="evidence" value="ECO:0007669"/>
    <property type="project" value="UniProtKB-KW"/>
</dbReference>
<comment type="subcellular location">
    <subcellularLocation>
        <location evidence="3">Host membrane</location>
        <topology evidence="3">Single-pass type I membrane protein</topology>
    </subcellularLocation>
</comment>
<feature type="signal peptide" evidence="1">
    <location>
        <begin position="1"/>
        <end position="18"/>
    </location>
</feature>
<feature type="chain" id="PRO_0000385080" description="Uncharacterized protein ORF54">
    <location>
        <begin position="19"/>
        <end position="807"/>
    </location>
</feature>
<feature type="topological domain" description="Extracellular" evidence="1">
    <location>
        <begin position="19"/>
        <end position="704"/>
    </location>
</feature>
<feature type="transmembrane region" description="Helical" evidence="1">
    <location>
        <begin position="705"/>
        <end position="725"/>
    </location>
</feature>
<feature type="topological domain" description="Cytoplasmic" evidence="1">
    <location>
        <begin position="726"/>
        <end position="807"/>
    </location>
</feature>
<feature type="region of interest" description="Disordered" evidence="2">
    <location>
        <begin position="133"/>
        <end position="171"/>
    </location>
</feature>
<feature type="compositionally biased region" description="Polar residues" evidence="2">
    <location>
        <begin position="133"/>
        <end position="142"/>
    </location>
</feature>
<feature type="glycosylation site" description="N-linked (GlcNAc...) asparagine; by host" evidence="1">
    <location>
        <position position="277"/>
    </location>
</feature>
<feature type="glycosylation site" description="N-linked (GlcNAc...) asparagine; by host" evidence="1">
    <location>
        <position position="660"/>
    </location>
</feature>
<accession>Q6R7H1</accession>
<gene>
    <name type="ORF">ORF54</name>
</gene>
<protein>
    <recommendedName>
        <fullName>Uncharacterized protein ORF54</fullName>
    </recommendedName>
</protein>
<evidence type="ECO:0000255" key="1"/>
<evidence type="ECO:0000256" key="2">
    <source>
        <dbReference type="SAM" id="MobiDB-lite"/>
    </source>
</evidence>
<evidence type="ECO:0000305" key="3"/>
<sequence length="807" mass="90093">MNTVLFVILLAAIGSNHGLIDERLTVNRMGYGVMFDKVSEIIDGGGIVHFSHTWSLIIPTYTIPSVENIDCTLLNAELTPICDSINNLIDSANTETYNSITDAKLRMAKALDVIPKSKPEDLINIDLGANLETTTTAAPQTGNRRRRRAAGDEPNTDDNTPPNLEIPDWLDPDKDNSDWEILIPGRLAGNLFTSIFDMPGSGTLKNSVRNLKALGGAIYTNTQSIINLNDQFAYIIQTTDKRMDEIQEMGDILVRKIAQTRASMVTFQNEFSAIYGNMSARILMLNKLKSMVVSNLYPDLFRMKVLGKDIETLCDMWTYGLINLASGYISPQLITETMMKHVIDHIVRNIIPQPTYNRFNLLSTDPAFYYKMKKMLSYARTADKVIVTINIPLYRTEGRMPLYRIYSFPIPLTMGTEDTSDKGYTKMADLPDFIAVDSNTDAYVEMTQAAYLSCSGAVSGIQSCGNAVGVTKRRDVTDMTCAFAIFIDDTTAIGKFCQTAYSDVGPVGSARQLASDSSFLISSGEDTDSFWTVNCPKSTINPISKVVPCNLCRMEISCGCSLSASHFKLNPRIGGCEKSLEGVPKTTKIYSRNMAAVTEFVTDEDLKLVNSYSARVDKLYPPIKMEKLEFKTYDNVEAYAEKSRKYGQDFIKGAELMKKNLTIYKDKVDEGLKKARDFSDQVVDREGSIINAISGLFTDIFGGEVWAVIAAIFSPVFLTAFALIISLINFIPAVRYDYKQYKKEKREKRYEEQRLALLGEADDEMKDSYGNYVKYSLPYNAATYVDIVVDEIIDPVTGERQVISRTN</sequence>
<organism>
    <name type="scientific">Ostreid herpesvirus 1 (isolate France)</name>
    <name type="common">OsHV-1</name>
    <name type="synonym">Pacific oyster herpesvirus</name>
    <dbReference type="NCBI Taxonomy" id="654903"/>
    <lineage>
        <taxon>Viruses</taxon>
        <taxon>Duplodnaviria</taxon>
        <taxon>Heunggongvirae</taxon>
        <taxon>Peploviricota</taxon>
        <taxon>Herviviricetes</taxon>
        <taxon>Herpesvirales</taxon>
        <taxon>Malacoherpesviridae</taxon>
        <taxon>Ostreavirus</taxon>
        <taxon>Ostreavirus ostreidmalaco1</taxon>
        <taxon>Ostreid herpesvirus 1</taxon>
    </lineage>
</organism>